<protein>
    <recommendedName>
        <fullName evidence="1">Transcriptional repressor NrdR</fullName>
    </recommendedName>
</protein>
<sequence>MKCPFCTHPDTRVADSRLMEERNAVRRRRHCPNCGKRFGTLETAELKMPAVIGPDKKRSPFNAQRLRNDLTAAARKSALTPEQIDETVRLTEHRLYTSGQRDIPSAALADMVLKELLRQDTEAAVRFAALHKRFDNPADFASWLAQAVKTGGKA</sequence>
<accession>Q9JVW7</accession>
<accession>A1IQ81</accession>
<comment type="function">
    <text evidence="1">Negatively regulates transcription of bacterial ribonucleotide reductase nrd genes and operons by binding to NrdR-boxes.</text>
</comment>
<comment type="cofactor">
    <cofactor evidence="1">
        <name>Zn(2+)</name>
        <dbReference type="ChEBI" id="CHEBI:29105"/>
    </cofactor>
    <text evidence="1">Binds 1 zinc ion.</text>
</comment>
<comment type="similarity">
    <text evidence="1">Belongs to the NrdR family.</text>
</comment>
<evidence type="ECO:0000255" key="1">
    <source>
        <dbReference type="HAMAP-Rule" id="MF_00440"/>
    </source>
</evidence>
<proteinExistence type="inferred from homology"/>
<gene>
    <name evidence="1" type="primary">nrdR</name>
    <name type="ordered locus">NMA0645</name>
</gene>
<name>NRDR_NEIMA</name>
<feature type="chain" id="PRO_0000182322" description="Transcriptional repressor NrdR">
    <location>
        <begin position="1"/>
        <end position="154"/>
    </location>
</feature>
<feature type="domain" description="ATP-cone" evidence="1">
    <location>
        <begin position="49"/>
        <end position="139"/>
    </location>
</feature>
<feature type="zinc finger region" evidence="1">
    <location>
        <begin position="3"/>
        <end position="34"/>
    </location>
</feature>
<keyword id="KW-0067">ATP-binding</keyword>
<keyword id="KW-0238">DNA-binding</keyword>
<keyword id="KW-0479">Metal-binding</keyword>
<keyword id="KW-0547">Nucleotide-binding</keyword>
<keyword id="KW-0678">Repressor</keyword>
<keyword id="KW-0804">Transcription</keyword>
<keyword id="KW-0805">Transcription regulation</keyword>
<keyword id="KW-0862">Zinc</keyword>
<keyword id="KW-0863">Zinc-finger</keyword>
<organism>
    <name type="scientific">Neisseria meningitidis serogroup A / serotype 4A (strain DSM 15465 / Z2491)</name>
    <dbReference type="NCBI Taxonomy" id="122587"/>
    <lineage>
        <taxon>Bacteria</taxon>
        <taxon>Pseudomonadati</taxon>
        <taxon>Pseudomonadota</taxon>
        <taxon>Betaproteobacteria</taxon>
        <taxon>Neisseriales</taxon>
        <taxon>Neisseriaceae</taxon>
        <taxon>Neisseria</taxon>
    </lineage>
</organism>
<reference key="1">
    <citation type="journal article" date="2000" name="Nature">
        <title>Complete DNA sequence of a serogroup A strain of Neisseria meningitidis Z2491.</title>
        <authorList>
            <person name="Parkhill J."/>
            <person name="Achtman M."/>
            <person name="James K.D."/>
            <person name="Bentley S.D."/>
            <person name="Churcher C.M."/>
            <person name="Klee S.R."/>
            <person name="Morelli G."/>
            <person name="Basham D."/>
            <person name="Brown D."/>
            <person name="Chillingworth T."/>
            <person name="Davies R.M."/>
            <person name="Davis P."/>
            <person name="Devlin K."/>
            <person name="Feltwell T."/>
            <person name="Hamlin N."/>
            <person name="Holroyd S."/>
            <person name="Jagels K."/>
            <person name="Leather S."/>
            <person name="Moule S."/>
            <person name="Mungall K.L."/>
            <person name="Quail M.A."/>
            <person name="Rajandream M.A."/>
            <person name="Rutherford K.M."/>
            <person name="Simmonds M."/>
            <person name="Skelton J."/>
            <person name="Whitehead S."/>
            <person name="Spratt B.G."/>
            <person name="Barrell B.G."/>
        </authorList>
    </citation>
    <scope>NUCLEOTIDE SEQUENCE [LARGE SCALE GENOMIC DNA]</scope>
    <source>
        <strain>DSM 15465 / Z2491</strain>
    </source>
</reference>
<dbReference type="EMBL" id="AL157959">
    <property type="protein sequence ID" value="CAM07909.1"/>
    <property type="molecule type" value="Genomic_DNA"/>
</dbReference>
<dbReference type="PIR" id="E81984">
    <property type="entry name" value="E81984"/>
</dbReference>
<dbReference type="RefSeq" id="WP_002247063.1">
    <property type="nucleotide sequence ID" value="NC_003116.1"/>
</dbReference>
<dbReference type="SMR" id="Q9JVW7"/>
<dbReference type="EnsemblBacteria" id="CAM07909">
    <property type="protein sequence ID" value="CAM07909"/>
    <property type="gene ID" value="NMA0645"/>
</dbReference>
<dbReference type="KEGG" id="nma:NMA0645"/>
<dbReference type="HOGENOM" id="CLU_108412_0_1_4"/>
<dbReference type="Proteomes" id="UP000000626">
    <property type="component" value="Chromosome"/>
</dbReference>
<dbReference type="GO" id="GO:0005524">
    <property type="term" value="F:ATP binding"/>
    <property type="evidence" value="ECO:0007669"/>
    <property type="project" value="UniProtKB-KW"/>
</dbReference>
<dbReference type="GO" id="GO:0003677">
    <property type="term" value="F:DNA binding"/>
    <property type="evidence" value="ECO:0007669"/>
    <property type="project" value="UniProtKB-KW"/>
</dbReference>
<dbReference type="GO" id="GO:0008270">
    <property type="term" value="F:zinc ion binding"/>
    <property type="evidence" value="ECO:0007669"/>
    <property type="project" value="UniProtKB-UniRule"/>
</dbReference>
<dbReference type="GO" id="GO:0045892">
    <property type="term" value="P:negative regulation of DNA-templated transcription"/>
    <property type="evidence" value="ECO:0007669"/>
    <property type="project" value="UniProtKB-UniRule"/>
</dbReference>
<dbReference type="HAMAP" id="MF_00440">
    <property type="entry name" value="NrdR"/>
    <property type="match status" value="1"/>
</dbReference>
<dbReference type="InterPro" id="IPR005144">
    <property type="entry name" value="ATP-cone_dom"/>
</dbReference>
<dbReference type="InterPro" id="IPR055173">
    <property type="entry name" value="NrdR-like_N"/>
</dbReference>
<dbReference type="InterPro" id="IPR003796">
    <property type="entry name" value="RNR_NrdR-like"/>
</dbReference>
<dbReference type="NCBIfam" id="TIGR00244">
    <property type="entry name" value="transcriptional regulator NrdR"/>
    <property type="match status" value="1"/>
</dbReference>
<dbReference type="PANTHER" id="PTHR30455">
    <property type="entry name" value="TRANSCRIPTIONAL REPRESSOR NRDR"/>
    <property type="match status" value="1"/>
</dbReference>
<dbReference type="PANTHER" id="PTHR30455:SF2">
    <property type="entry name" value="TRANSCRIPTIONAL REPRESSOR NRDR"/>
    <property type="match status" value="1"/>
</dbReference>
<dbReference type="Pfam" id="PF03477">
    <property type="entry name" value="ATP-cone"/>
    <property type="match status" value="1"/>
</dbReference>
<dbReference type="Pfam" id="PF22811">
    <property type="entry name" value="Zn_ribbon_NrdR"/>
    <property type="match status" value="1"/>
</dbReference>
<dbReference type="PROSITE" id="PS51161">
    <property type="entry name" value="ATP_CONE"/>
    <property type="match status" value="1"/>
</dbReference>